<organism>
    <name type="scientific">Mannheimia succiniciproducens (strain KCTC 0769BP / MBEL55E)</name>
    <dbReference type="NCBI Taxonomy" id="221988"/>
    <lineage>
        <taxon>Bacteria</taxon>
        <taxon>Pseudomonadati</taxon>
        <taxon>Pseudomonadota</taxon>
        <taxon>Gammaproteobacteria</taxon>
        <taxon>Pasteurellales</taxon>
        <taxon>Pasteurellaceae</taxon>
        <taxon>Basfia</taxon>
    </lineage>
</organism>
<proteinExistence type="inferred from homology"/>
<accession>Q65UG3</accession>
<feature type="chain" id="PRO_0000281517" description="Zinc import ATP-binding protein ZnuC">
    <location>
        <begin position="1"/>
        <end position="264"/>
    </location>
</feature>
<feature type="domain" description="ABC transporter" evidence="1">
    <location>
        <begin position="11"/>
        <end position="226"/>
    </location>
</feature>
<feature type="binding site" evidence="1">
    <location>
        <begin position="43"/>
        <end position="50"/>
    </location>
    <ligand>
        <name>ATP</name>
        <dbReference type="ChEBI" id="CHEBI:30616"/>
    </ligand>
</feature>
<name>ZNUC_MANSM</name>
<evidence type="ECO:0000255" key="1">
    <source>
        <dbReference type="HAMAP-Rule" id="MF_01725"/>
    </source>
</evidence>
<evidence type="ECO:0000305" key="2"/>
<comment type="function">
    <text evidence="1">Part of the ABC transporter complex ZnuABC involved in zinc import. Responsible for energy coupling to the transport system.</text>
</comment>
<comment type="catalytic activity">
    <reaction evidence="1">
        <text>Zn(2+)(out) + ATP(in) + H2O(in) = Zn(2+)(in) + ADP(in) + phosphate(in) + H(+)(in)</text>
        <dbReference type="Rhea" id="RHEA:29795"/>
        <dbReference type="ChEBI" id="CHEBI:15377"/>
        <dbReference type="ChEBI" id="CHEBI:15378"/>
        <dbReference type="ChEBI" id="CHEBI:29105"/>
        <dbReference type="ChEBI" id="CHEBI:30616"/>
        <dbReference type="ChEBI" id="CHEBI:43474"/>
        <dbReference type="ChEBI" id="CHEBI:456216"/>
        <dbReference type="EC" id="7.2.2.20"/>
    </reaction>
</comment>
<comment type="subunit">
    <text evidence="1">The complex is composed of two ATP-binding proteins (ZnuC), two transmembrane proteins (ZnuB) and a solute-binding protein (ZnuA).</text>
</comment>
<comment type="subcellular location">
    <subcellularLocation>
        <location evidence="1">Cell inner membrane</location>
        <topology evidence="1">Peripheral membrane protein</topology>
    </subcellularLocation>
</comment>
<comment type="similarity">
    <text evidence="1">Belongs to the ABC transporter superfamily. Zinc importer (TC 3.A.1.15.5) family.</text>
</comment>
<comment type="sequence caution" evidence="2">
    <conflict type="erroneous initiation">
        <sequence resource="EMBL-CDS" id="AAU37397"/>
    </conflict>
</comment>
<reference key="1">
    <citation type="journal article" date="2004" name="Nat. Biotechnol.">
        <title>The genome sequence of the capnophilic rumen bacterium Mannheimia succiniciproducens.</title>
        <authorList>
            <person name="Hong S.H."/>
            <person name="Kim J.S."/>
            <person name="Lee S.Y."/>
            <person name="In Y.H."/>
            <person name="Choi S.S."/>
            <person name="Rih J.-K."/>
            <person name="Kim C.H."/>
            <person name="Jeong H."/>
            <person name="Hur C.G."/>
            <person name="Kim J.J."/>
        </authorList>
    </citation>
    <scope>NUCLEOTIDE SEQUENCE [LARGE SCALE GENOMIC DNA]</scope>
    <source>
        <strain>KCTC 0769BP / MBEL55E</strain>
    </source>
</reference>
<gene>
    <name evidence="1" type="primary">znuC</name>
    <name type="ordered locus">MS0790</name>
</gene>
<keyword id="KW-0067">ATP-binding</keyword>
<keyword id="KW-0997">Cell inner membrane</keyword>
<keyword id="KW-1003">Cell membrane</keyword>
<keyword id="KW-0406">Ion transport</keyword>
<keyword id="KW-0472">Membrane</keyword>
<keyword id="KW-0547">Nucleotide-binding</keyword>
<keyword id="KW-1278">Translocase</keyword>
<keyword id="KW-0813">Transport</keyword>
<keyword id="KW-0862">Zinc</keyword>
<keyword id="KW-0864">Zinc transport</keyword>
<sequence length="264" mass="29417">MQINSIKIPLIELQNIKVVFGAKTALQNINLSIYPNTVITIVGPNGGGKSTLLKVLLKLLSPTDGKVIHHRDLRIGYVPQKIHLEQSLPITVEKFLSLKKGISKAEIQDAIELLSIKHLIHSSMQKLSGGEMQRVLLARALLNKPNLLVLDEPMQGVDLSGQIELYQLIHQTREKLNCAILMVSHDLHIVMADTNEVVCINRHICCAGSPEKVSNDPTFIHLFGDQFSQNVAFYTHHHNHQHNMHGDVCCIGNKHSVQCINNGR</sequence>
<protein>
    <recommendedName>
        <fullName evidence="1">Zinc import ATP-binding protein ZnuC</fullName>
        <ecNumber evidence="1">7.2.2.20</ecNumber>
    </recommendedName>
</protein>
<dbReference type="EC" id="7.2.2.20" evidence="1"/>
<dbReference type="EMBL" id="AE016827">
    <property type="protein sequence ID" value="AAU37397.1"/>
    <property type="status" value="ALT_INIT"/>
    <property type="molecule type" value="Genomic_DNA"/>
</dbReference>
<dbReference type="RefSeq" id="WP_041639619.1">
    <property type="nucleotide sequence ID" value="NC_006300.1"/>
</dbReference>
<dbReference type="SMR" id="Q65UG3"/>
<dbReference type="STRING" id="221988.MS0790"/>
<dbReference type="KEGG" id="msu:MS0790"/>
<dbReference type="eggNOG" id="COG1121">
    <property type="taxonomic scope" value="Bacteria"/>
</dbReference>
<dbReference type="HOGENOM" id="CLU_000604_1_11_6"/>
<dbReference type="OrthoDB" id="9780942at2"/>
<dbReference type="Proteomes" id="UP000000607">
    <property type="component" value="Chromosome"/>
</dbReference>
<dbReference type="GO" id="GO:0005886">
    <property type="term" value="C:plasma membrane"/>
    <property type="evidence" value="ECO:0007669"/>
    <property type="project" value="UniProtKB-SubCell"/>
</dbReference>
<dbReference type="GO" id="GO:0015633">
    <property type="term" value="F:ABC-type zinc transporter activity"/>
    <property type="evidence" value="ECO:0007669"/>
    <property type="project" value="UniProtKB-EC"/>
</dbReference>
<dbReference type="GO" id="GO:0005524">
    <property type="term" value="F:ATP binding"/>
    <property type="evidence" value="ECO:0007669"/>
    <property type="project" value="UniProtKB-KW"/>
</dbReference>
<dbReference type="GO" id="GO:0016887">
    <property type="term" value="F:ATP hydrolysis activity"/>
    <property type="evidence" value="ECO:0007669"/>
    <property type="project" value="InterPro"/>
</dbReference>
<dbReference type="GO" id="GO:0010043">
    <property type="term" value="P:response to zinc ion"/>
    <property type="evidence" value="ECO:0007669"/>
    <property type="project" value="TreeGrafter"/>
</dbReference>
<dbReference type="FunFam" id="3.40.50.300:FF:000392">
    <property type="entry name" value="Zinc import ATP-binding protein ZnuC"/>
    <property type="match status" value="1"/>
</dbReference>
<dbReference type="Gene3D" id="3.40.50.300">
    <property type="entry name" value="P-loop containing nucleotide triphosphate hydrolases"/>
    <property type="match status" value="1"/>
</dbReference>
<dbReference type="InterPro" id="IPR003593">
    <property type="entry name" value="AAA+_ATPase"/>
</dbReference>
<dbReference type="InterPro" id="IPR003439">
    <property type="entry name" value="ABC_transporter-like_ATP-bd"/>
</dbReference>
<dbReference type="InterPro" id="IPR017871">
    <property type="entry name" value="ABC_transporter-like_CS"/>
</dbReference>
<dbReference type="InterPro" id="IPR050153">
    <property type="entry name" value="Metal_Ion_Import_ABC"/>
</dbReference>
<dbReference type="InterPro" id="IPR027417">
    <property type="entry name" value="P-loop_NTPase"/>
</dbReference>
<dbReference type="NCBIfam" id="NF007090">
    <property type="entry name" value="PRK09544.1"/>
    <property type="match status" value="1"/>
</dbReference>
<dbReference type="PANTHER" id="PTHR42734">
    <property type="entry name" value="METAL TRANSPORT SYSTEM ATP-BINDING PROTEIN TM_0124-RELATED"/>
    <property type="match status" value="1"/>
</dbReference>
<dbReference type="PANTHER" id="PTHR42734:SF9">
    <property type="entry name" value="ZINC IMPORT ATP-BINDING PROTEIN ZNUC"/>
    <property type="match status" value="1"/>
</dbReference>
<dbReference type="Pfam" id="PF00005">
    <property type="entry name" value="ABC_tran"/>
    <property type="match status" value="1"/>
</dbReference>
<dbReference type="SMART" id="SM00382">
    <property type="entry name" value="AAA"/>
    <property type="match status" value="1"/>
</dbReference>
<dbReference type="SUPFAM" id="SSF52540">
    <property type="entry name" value="P-loop containing nucleoside triphosphate hydrolases"/>
    <property type="match status" value="1"/>
</dbReference>
<dbReference type="PROSITE" id="PS00211">
    <property type="entry name" value="ABC_TRANSPORTER_1"/>
    <property type="match status" value="1"/>
</dbReference>
<dbReference type="PROSITE" id="PS50893">
    <property type="entry name" value="ABC_TRANSPORTER_2"/>
    <property type="match status" value="1"/>
</dbReference>
<dbReference type="PROSITE" id="PS51298">
    <property type="entry name" value="ZNUC"/>
    <property type="match status" value="1"/>
</dbReference>